<organism>
    <name type="scientific">Streptococcus pneumoniae serotype 4 (strain ATCC BAA-334 / TIGR4)</name>
    <dbReference type="NCBI Taxonomy" id="170187"/>
    <lineage>
        <taxon>Bacteria</taxon>
        <taxon>Bacillati</taxon>
        <taxon>Bacillota</taxon>
        <taxon>Bacilli</taxon>
        <taxon>Lactobacillales</taxon>
        <taxon>Streptococcaceae</taxon>
        <taxon>Streptococcus</taxon>
    </lineage>
</organism>
<protein>
    <recommendedName>
        <fullName evidence="2">Phosphoribosylamine--glycine ligase</fullName>
        <ecNumber evidence="2">6.3.4.13</ecNumber>
    </recommendedName>
    <alternativeName>
        <fullName evidence="2">GARS</fullName>
    </alternativeName>
    <alternativeName>
        <fullName evidence="2">Glycinamide ribonucleotide synthetase</fullName>
    </alternativeName>
    <alternativeName>
        <fullName evidence="2">Phosphoribosylglycinamide synthetase</fullName>
    </alternativeName>
</protein>
<dbReference type="EC" id="6.3.4.13" evidence="2"/>
<dbReference type="EMBL" id="AE005672">
    <property type="protein sequence ID" value="AAK74240.1"/>
    <property type="molecule type" value="Genomic_DNA"/>
</dbReference>
<dbReference type="PIR" id="G95005">
    <property type="entry name" value="G95005"/>
</dbReference>
<dbReference type="RefSeq" id="WP_000772229.1">
    <property type="nucleotide sequence ID" value="NC_003028.3"/>
</dbReference>
<dbReference type="SMR" id="Q97T98"/>
<dbReference type="PaxDb" id="170187-SP_0051"/>
<dbReference type="EnsemblBacteria" id="AAK74240">
    <property type="protein sequence ID" value="AAK74240"/>
    <property type="gene ID" value="SP_0051"/>
</dbReference>
<dbReference type="KEGG" id="spn:SP_0051"/>
<dbReference type="eggNOG" id="COG0151">
    <property type="taxonomic scope" value="Bacteria"/>
</dbReference>
<dbReference type="PhylomeDB" id="Q97T98"/>
<dbReference type="BioCyc" id="SPNE170187:G1FZB-57-MONOMER"/>
<dbReference type="UniPathway" id="UPA00074">
    <property type="reaction ID" value="UER00125"/>
</dbReference>
<dbReference type="Proteomes" id="UP000000585">
    <property type="component" value="Chromosome"/>
</dbReference>
<dbReference type="GO" id="GO:0005524">
    <property type="term" value="F:ATP binding"/>
    <property type="evidence" value="ECO:0007669"/>
    <property type="project" value="UniProtKB-KW"/>
</dbReference>
<dbReference type="GO" id="GO:0046872">
    <property type="term" value="F:metal ion binding"/>
    <property type="evidence" value="ECO:0007669"/>
    <property type="project" value="UniProtKB-KW"/>
</dbReference>
<dbReference type="GO" id="GO:0004637">
    <property type="term" value="F:phosphoribosylamine-glycine ligase activity"/>
    <property type="evidence" value="ECO:0007669"/>
    <property type="project" value="UniProtKB-UniRule"/>
</dbReference>
<dbReference type="GO" id="GO:0006189">
    <property type="term" value="P:'de novo' IMP biosynthetic process"/>
    <property type="evidence" value="ECO:0007669"/>
    <property type="project" value="UniProtKB-UniRule"/>
</dbReference>
<dbReference type="GO" id="GO:0009113">
    <property type="term" value="P:purine nucleobase biosynthetic process"/>
    <property type="evidence" value="ECO:0007669"/>
    <property type="project" value="InterPro"/>
</dbReference>
<dbReference type="FunFam" id="3.30.1490.20:FF:000006">
    <property type="entry name" value="phosphoribosylamine--glycine ligase, chloroplastic-like"/>
    <property type="match status" value="1"/>
</dbReference>
<dbReference type="FunFam" id="3.30.470.20:FF:000018">
    <property type="entry name" value="Trifunctional purine biosynthetic protein adenosine-3"/>
    <property type="match status" value="1"/>
</dbReference>
<dbReference type="Gene3D" id="3.40.50.20">
    <property type="match status" value="1"/>
</dbReference>
<dbReference type="Gene3D" id="3.30.1490.20">
    <property type="entry name" value="ATP-grasp fold, A domain"/>
    <property type="match status" value="1"/>
</dbReference>
<dbReference type="Gene3D" id="3.30.470.20">
    <property type="entry name" value="ATP-grasp fold, B domain"/>
    <property type="match status" value="1"/>
</dbReference>
<dbReference type="Gene3D" id="3.90.600.10">
    <property type="entry name" value="Phosphoribosylglycinamide synthetase, C-terminal domain"/>
    <property type="match status" value="1"/>
</dbReference>
<dbReference type="HAMAP" id="MF_00138">
    <property type="entry name" value="GARS"/>
    <property type="match status" value="1"/>
</dbReference>
<dbReference type="InterPro" id="IPR011761">
    <property type="entry name" value="ATP-grasp"/>
</dbReference>
<dbReference type="InterPro" id="IPR013815">
    <property type="entry name" value="ATP_grasp_subdomain_1"/>
</dbReference>
<dbReference type="InterPro" id="IPR016185">
    <property type="entry name" value="PreATP-grasp_dom_sf"/>
</dbReference>
<dbReference type="InterPro" id="IPR020561">
    <property type="entry name" value="PRibGlycinamid_synth_ATP-grasp"/>
</dbReference>
<dbReference type="InterPro" id="IPR000115">
    <property type="entry name" value="PRibGlycinamide_synth"/>
</dbReference>
<dbReference type="InterPro" id="IPR020560">
    <property type="entry name" value="PRibGlycinamide_synth_C-dom"/>
</dbReference>
<dbReference type="InterPro" id="IPR037123">
    <property type="entry name" value="PRibGlycinamide_synth_C_sf"/>
</dbReference>
<dbReference type="InterPro" id="IPR020559">
    <property type="entry name" value="PRibGlycinamide_synth_CS"/>
</dbReference>
<dbReference type="InterPro" id="IPR020562">
    <property type="entry name" value="PRibGlycinamide_synth_N"/>
</dbReference>
<dbReference type="InterPro" id="IPR011054">
    <property type="entry name" value="Rudment_hybrid_motif"/>
</dbReference>
<dbReference type="NCBIfam" id="TIGR00877">
    <property type="entry name" value="purD"/>
    <property type="match status" value="1"/>
</dbReference>
<dbReference type="PANTHER" id="PTHR43472">
    <property type="entry name" value="PHOSPHORIBOSYLAMINE--GLYCINE LIGASE"/>
    <property type="match status" value="1"/>
</dbReference>
<dbReference type="PANTHER" id="PTHR43472:SF1">
    <property type="entry name" value="PHOSPHORIBOSYLAMINE--GLYCINE LIGASE, CHLOROPLASTIC"/>
    <property type="match status" value="1"/>
</dbReference>
<dbReference type="Pfam" id="PF01071">
    <property type="entry name" value="GARS_A"/>
    <property type="match status" value="1"/>
</dbReference>
<dbReference type="Pfam" id="PF02843">
    <property type="entry name" value="GARS_C"/>
    <property type="match status" value="1"/>
</dbReference>
<dbReference type="Pfam" id="PF02844">
    <property type="entry name" value="GARS_N"/>
    <property type="match status" value="1"/>
</dbReference>
<dbReference type="SMART" id="SM01209">
    <property type="entry name" value="GARS_A"/>
    <property type="match status" value="1"/>
</dbReference>
<dbReference type="SMART" id="SM01210">
    <property type="entry name" value="GARS_C"/>
    <property type="match status" value="1"/>
</dbReference>
<dbReference type="SUPFAM" id="SSF56059">
    <property type="entry name" value="Glutathione synthetase ATP-binding domain-like"/>
    <property type="match status" value="1"/>
</dbReference>
<dbReference type="SUPFAM" id="SSF52440">
    <property type="entry name" value="PreATP-grasp domain"/>
    <property type="match status" value="1"/>
</dbReference>
<dbReference type="SUPFAM" id="SSF51246">
    <property type="entry name" value="Rudiment single hybrid motif"/>
    <property type="match status" value="1"/>
</dbReference>
<dbReference type="PROSITE" id="PS50975">
    <property type="entry name" value="ATP_GRASP"/>
    <property type="match status" value="1"/>
</dbReference>
<dbReference type="PROSITE" id="PS00184">
    <property type="entry name" value="GARS"/>
    <property type="match status" value="1"/>
</dbReference>
<gene>
    <name evidence="2" type="primary">purD</name>
    <name type="ordered locus">SP_0051</name>
</gene>
<sequence>MKLLVVGSGGREHAIAKKLLESKDVEKVFVAPGNDGMTLDGLELVNISISEHYKLIDFAKTNDVAWTFIGPDDALAAGIVDDFNQAGLKAFGPTRAAAELEWSKDFAKEIMVKYGVPTATYGTFSDFEEAKAYIEKHGAPIVVKADGLALGKGVVVAETVEQAVEAAHEMLLDNKFGDSGARVVIEEFLEGEEFSLFAFVNGDKFYIMPTAQDHKRAYDGDKGPNTGGMGAYAPVPHLPQSVVDTAVDTIVKPVLEGVIKEGRPYLGVLYAGLILTADGPKVIEFNARFGDPETQIILPRLTSDFAQNITDILDSKEPNIMWTDKGVTLGVVVASKGYPLDYERGVELPAKTEGDVITYYAGAKFAENSRALLSNGGRVYMLVTTADTVKEAQASIYQELYQQKIEGLFYRTDIGSKAIK</sequence>
<name>PUR2_STRPN</name>
<accession>Q97T98</accession>
<reference key="1">
    <citation type="journal article" date="2001" name="Science">
        <title>Complete genome sequence of a virulent isolate of Streptococcus pneumoniae.</title>
        <authorList>
            <person name="Tettelin H."/>
            <person name="Nelson K.E."/>
            <person name="Paulsen I.T."/>
            <person name="Eisen J.A."/>
            <person name="Read T.D."/>
            <person name="Peterson S.N."/>
            <person name="Heidelberg J.F."/>
            <person name="DeBoy R.T."/>
            <person name="Haft D.H."/>
            <person name="Dodson R.J."/>
            <person name="Durkin A.S."/>
            <person name="Gwinn M.L."/>
            <person name="Kolonay J.F."/>
            <person name="Nelson W.C."/>
            <person name="Peterson J.D."/>
            <person name="Umayam L.A."/>
            <person name="White O."/>
            <person name="Salzberg S.L."/>
            <person name="Lewis M.R."/>
            <person name="Radune D."/>
            <person name="Holtzapple E.K."/>
            <person name="Khouri H.M."/>
            <person name="Wolf A.M."/>
            <person name="Utterback T.R."/>
            <person name="Hansen C.L."/>
            <person name="McDonald L.A."/>
            <person name="Feldblyum T.V."/>
            <person name="Angiuoli S.V."/>
            <person name="Dickinson T."/>
            <person name="Hickey E.K."/>
            <person name="Holt I.E."/>
            <person name="Loftus B.J."/>
            <person name="Yang F."/>
            <person name="Smith H.O."/>
            <person name="Venter J.C."/>
            <person name="Dougherty B.A."/>
            <person name="Morrison D.A."/>
            <person name="Hollingshead S.K."/>
            <person name="Fraser C.M."/>
        </authorList>
    </citation>
    <scope>NUCLEOTIDE SEQUENCE [LARGE SCALE GENOMIC DNA]</scope>
    <source>
        <strain>ATCC BAA-334 / TIGR4</strain>
    </source>
</reference>
<proteinExistence type="inferred from homology"/>
<feature type="chain" id="PRO_0000151487" description="Phosphoribosylamine--glycine ligase">
    <location>
        <begin position="1"/>
        <end position="420"/>
    </location>
</feature>
<feature type="domain" description="ATP-grasp" evidence="2">
    <location>
        <begin position="108"/>
        <end position="314"/>
    </location>
</feature>
<feature type="binding site" evidence="2">
    <location>
        <begin position="134"/>
        <end position="195"/>
    </location>
    <ligand>
        <name>ATP</name>
        <dbReference type="ChEBI" id="CHEBI:30616"/>
    </ligand>
</feature>
<feature type="binding site" evidence="2">
    <location>
        <position position="284"/>
    </location>
    <ligand>
        <name>Mg(2+)</name>
        <dbReference type="ChEBI" id="CHEBI:18420"/>
    </ligand>
</feature>
<feature type="binding site" evidence="2">
    <location>
        <position position="286"/>
    </location>
    <ligand>
        <name>Mg(2+)</name>
        <dbReference type="ChEBI" id="CHEBI:18420"/>
    </ligand>
</feature>
<keyword id="KW-0067">ATP-binding</keyword>
<keyword id="KW-0436">Ligase</keyword>
<keyword id="KW-0460">Magnesium</keyword>
<keyword id="KW-0464">Manganese</keyword>
<keyword id="KW-0479">Metal-binding</keyword>
<keyword id="KW-0547">Nucleotide-binding</keyword>
<keyword id="KW-0658">Purine biosynthesis</keyword>
<keyword id="KW-1185">Reference proteome</keyword>
<comment type="catalytic activity">
    <reaction evidence="2">
        <text>5-phospho-beta-D-ribosylamine + glycine + ATP = N(1)-(5-phospho-beta-D-ribosyl)glycinamide + ADP + phosphate + H(+)</text>
        <dbReference type="Rhea" id="RHEA:17453"/>
        <dbReference type="ChEBI" id="CHEBI:15378"/>
        <dbReference type="ChEBI" id="CHEBI:30616"/>
        <dbReference type="ChEBI" id="CHEBI:43474"/>
        <dbReference type="ChEBI" id="CHEBI:57305"/>
        <dbReference type="ChEBI" id="CHEBI:58681"/>
        <dbReference type="ChEBI" id="CHEBI:143788"/>
        <dbReference type="ChEBI" id="CHEBI:456216"/>
        <dbReference type="EC" id="6.3.4.13"/>
    </reaction>
</comment>
<comment type="cofactor">
    <cofactor evidence="1">
        <name>Mg(2+)</name>
        <dbReference type="ChEBI" id="CHEBI:18420"/>
    </cofactor>
    <cofactor evidence="1">
        <name>Mn(2+)</name>
        <dbReference type="ChEBI" id="CHEBI:29035"/>
    </cofactor>
    <text evidence="1">Binds 1 Mg(2+) or Mn(2+) ion per subunit.</text>
</comment>
<comment type="pathway">
    <text evidence="2">Purine metabolism; IMP biosynthesis via de novo pathway; N(1)-(5-phospho-D-ribosyl)glycinamide from 5-phospho-alpha-D-ribose 1-diphosphate: step 2/2.</text>
</comment>
<comment type="similarity">
    <text evidence="2">Belongs to the GARS family.</text>
</comment>
<evidence type="ECO:0000250" key="1"/>
<evidence type="ECO:0000255" key="2">
    <source>
        <dbReference type="HAMAP-Rule" id="MF_00138"/>
    </source>
</evidence>